<evidence type="ECO:0000250" key="1"/>
<evidence type="ECO:0000305" key="2"/>
<sequence length="246" mass="27919">MKLTPELLSRSSSSINTLRDRELDLRGLKIPAIENLGVTRDQNDAIDLTDNDIRYLGNFPLLQQLKTLQLANNLISRIDPRIGHSLPALHSLNLTNNCISDLSELVHLSKCRRLEYLCLMGTPASREAQYREFVIWKLPQVRVLDYQRIKDKERARAKDLMETEDGRPTALAANILKKLGASAMDVDVDVMVGKQKTFEPGRLNGSSRRLLTAEERKAIEDAIESSESLEEIRKLEEQLKMGHTFV</sequence>
<comment type="function">
    <text evidence="1">Involved in pre-mRNA splicing.</text>
</comment>
<comment type="subunit">
    <text evidence="1">Associated with the spliceosome.</text>
</comment>
<comment type="subcellular location">
    <subcellularLocation>
        <location evidence="1">Nucleus</location>
    </subcellularLocation>
</comment>
<comment type="similarity">
    <text evidence="2">Belongs to the U2 small nuclear ribonucleoprotein A family.</text>
</comment>
<name>RU2A_MYCMD</name>
<keyword id="KW-0433">Leucine-rich repeat</keyword>
<keyword id="KW-0507">mRNA processing</keyword>
<keyword id="KW-0508">mRNA splicing</keyword>
<keyword id="KW-0539">Nucleus</keyword>
<keyword id="KW-1185">Reference proteome</keyword>
<keyword id="KW-0677">Repeat</keyword>
<keyword id="KW-0747">Spliceosome</keyword>
<proteinExistence type="inferred from homology"/>
<reference key="1">
    <citation type="journal article" date="2006" name="Nature">
        <title>Insights from the genome of the biotrophic fungal plant pathogen Ustilago maydis.</title>
        <authorList>
            <person name="Kaemper J."/>
            <person name="Kahmann R."/>
            <person name="Boelker M."/>
            <person name="Ma L.-J."/>
            <person name="Brefort T."/>
            <person name="Saville B.J."/>
            <person name="Banuett F."/>
            <person name="Kronstad J.W."/>
            <person name="Gold S.E."/>
            <person name="Mueller O."/>
            <person name="Perlin M.H."/>
            <person name="Woesten H.A.B."/>
            <person name="de Vries R."/>
            <person name="Ruiz-Herrera J."/>
            <person name="Reynaga-Pena C.G."/>
            <person name="Snetselaar K."/>
            <person name="McCann M."/>
            <person name="Perez-Martin J."/>
            <person name="Feldbruegge M."/>
            <person name="Basse C.W."/>
            <person name="Steinberg G."/>
            <person name="Ibeas J.I."/>
            <person name="Holloman W."/>
            <person name="Guzman P."/>
            <person name="Farman M.L."/>
            <person name="Stajich J.E."/>
            <person name="Sentandreu R."/>
            <person name="Gonzalez-Prieto J.M."/>
            <person name="Kennell J.C."/>
            <person name="Molina L."/>
            <person name="Schirawski J."/>
            <person name="Mendoza-Mendoza A."/>
            <person name="Greilinger D."/>
            <person name="Muench K."/>
            <person name="Roessel N."/>
            <person name="Scherer M."/>
            <person name="Vranes M."/>
            <person name="Ladendorf O."/>
            <person name="Vincon V."/>
            <person name="Fuchs U."/>
            <person name="Sandrock B."/>
            <person name="Meng S."/>
            <person name="Ho E.C.H."/>
            <person name="Cahill M.J."/>
            <person name="Boyce K.J."/>
            <person name="Klose J."/>
            <person name="Klosterman S.J."/>
            <person name="Deelstra H.J."/>
            <person name="Ortiz-Castellanos L."/>
            <person name="Li W."/>
            <person name="Sanchez-Alonso P."/>
            <person name="Schreier P.H."/>
            <person name="Haeuser-Hahn I."/>
            <person name="Vaupel M."/>
            <person name="Koopmann E."/>
            <person name="Friedrich G."/>
            <person name="Voss H."/>
            <person name="Schlueter T."/>
            <person name="Margolis J."/>
            <person name="Platt D."/>
            <person name="Swimmer C."/>
            <person name="Gnirke A."/>
            <person name="Chen F."/>
            <person name="Vysotskaia V."/>
            <person name="Mannhaupt G."/>
            <person name="Gueldener U."/>
            <person name="Muensterkoetter M."/>
            <person name="Haase D."/>
            <person name="Oesterheld M."/>
            <person name="Mewes H.-W."/>
            <person name="Mauceli E.W."/>
            <person name="DeCaprio D."/>
            <person name="Wade C.M."/>
            <person name="Butler J."/>
            <person name="Young S.K."/>
            <person name="Jaffe D.B."/>
            <person name="Calvo S.E."/>
            <person name="Nusbaum C."/>
            <person name="Galagan J.E."/>
            <person name="Birren B.W."/>
        </authorList>
    </citation>
    <scope>NUCLEOTIDE SEQUENCE [LARGE SCALE GENOMIC DNA]</scope>
    <source>
        <strain>DSM 14603 / FGSC 9021 / UM521</strain>
    </source>
</reference>
<reference key="2">
    <citation type="submission" date="2014-09" db="EMBL/GenBank/DDBJ databases">
        <authorList>
            <person name="Gueldener U."/>
            <person name="Muensterkoetter M."/>
            <person name="Walter M.C."/>
            <person name="Mannhaupt G."/>
            <person name="Kahmann R."/>
        </authorList>
    </citation>
    <scope>GENOME REANNOTATION</scope>
    <source>
        <strain>DSM 14603 / FGSC 9021 / UM521</strain>
    </source>
</reference>
<gene>
    <name type="primary">LEA1</name>
    <name type="ORF">UMAG_04654</name>
</gene>
<protein>
    <recommendedName>
        <fullName>U2 small nuclear ribonucleoprotein A'</fullName>
        <shortName>U2 snRNP A'</shortName>
    </recommendedName>
</protein>
<organism>
    <name type="scientific">Mycosarcoma maydis</name>
    <name type="common">Corn smut fungus</name>
    <name type="synonym">Ustilago maydis</name>
    <dbReference type="NCBI Taxonomy" id="5270"/>
    <lineage>
        <taxon>Eukaryota</taxon>
        <taxon>Fungi</taxon>
        <taxon>Dikarya</taxon>
        <taxon>Basidiomycota</taxon>
        <taxon>Ustilaginomycotina</taxon>
        <taxon>Ustilaginomycetes</taxon>
        <taxon>Ustilaginales</taxon>
        <taxon>Ustilaginaceae</taxon>
        <taxon>Mycosarcoma</taxon>
    </lineage>
</organism>
<accession>Q4P5F9</accession>
<accession>A0A0D1CLI3</accession>
<feature type="chain" id="PRO_0000074187" description="U2 small nuclear ribonucleoprotein A'">
    <location>
        <begin position="1"/>
        <end position="246"/>
    </location>
</feature>
<feature type="repeat" description="LRR 1">
    <location>
        <begin position="19"/>
        <end position="40"/>
    </location>
</feature>
<feature type="repeat" description="LRR 2">
    <location>
        <begin position="42"/>
        <end position="63"/>
    </location>
</feature>
<feature type="repeat" description="LRR 3">
    <location>
        <begin position="64"/>
        <end position="85"/>
    </location>
</feature>
<feature type="repeat" description="LRR 4">
    <location>
        <begin position="88"/>
        <end position="109"/>
    </location>
</feature>
<feature type="domain" description="LRRCT">
    <location>
        <begin position="122"/>
        <end position="160"/>
    </location>
</feature>
<dbReference type="EMBL" id="CM003152">
    <property type="protein sequence ID" value="KIS67558.1"/>
    <property type="molecule type" value="Genomic_DNA"/>
</dbReference>
<dbReference type="RefSeq" id="XP_011390931.1">
    <property type="nucleotide sequence ID" value="XM_011392629.1"/>
</dbReference>
<dbReference type="SMR" id="Q4P5F9"/>
<dbReference type="FunCoup" id="Q4P5F9">
    <property type="interactions" value="827"/>
</dbReference>
<dbReference type="STRING" id="237631.Q4P5F9"/>
<dbReference type="EnsemblFungi" id="KIS67558">
    <property type="protein sequence ID" value="KIS67558"/>
    <property type="gene ID" value="UMAG_04654"/>
</dbReference>
<dbReference type="GeneID" id="23564763"/>
<dbReference type="KEGG" id="uma:UMAG_04654"/>
<dbReference type="VEuPathDB" id="FungiDB:UMAG_04654"/>
<dbReference type="eggNOG" id="KOG1644">
    <property type="taxonomic scope" value="Eukaryota"/>
</dbReference>
<dbReference type="HOGENOM" id="CLU_061027_1_0_1"/>
<dbReference type="InParanoid" id="Q4P5F9"/>
<dbReference type="OMA" id="PNYREYM"/>
<dbReference type="OrthoDB" id="433501at2759"/>
<dbReference type="Proteomes" id="UP000000561">
    <property type="component" value="Chromosome 13"/>
</dbReference>
<dbReference type="GO" id="GO:0071014">
    <property type="term" value="C:post-mRNA release spliceosomal complex"/>
    <property type="evidence" value="ECO:0007669"/>
    <property type="project" value="EnsemblFungi"/>
</dbReference>
<dbReference type="GO" id="GO:0005686">
    <property type="term" value="C:U2 snRNP"/>
    <property type="evidence" value="ECO:0000318"/>
    <property type="project" value="GO_Central"/>
</dbReference>
<dbReference type="GO" id="GO:0030620">
    <property type="term" value="F:U2 snRNA binding"/>
    <property type="evidence" value="ECO:0000318"/>
    <property type="project" value="GO_Central"/>
</dbReference>
<dbReference type="GO" id="GO:0000398">
    <property type="term" value="P:mRNA splicing, via spliceosome"/>
    <property type="evidence" value="ECO:0000318"/>
    <property type="project" value="GO_Central"/>
</dbReference>
<dbReference type="FunFam" id="3.80.10.10:FF:000026">
    <property type="entry name" value="U2 small nuclear ribonucleoprotein A"/>
    <property type="match status" value="1"/>
</dbReference>
<dbReference type="Gene3D" id="3.80.10.10">
    <property type="entry name" value="Ribonuclease Inhibitor"/>
    <property type="match status" value="1"/>
</dbReference>
<dbReference type="InterPro" id="IPR001611">
    <property type="entry name" value="Leu-rich_rpt"/>
</dbReference>
<dbReference type="InterPro" id="IPR003591">
    <property type="entry name" value="Leu-rich_rpt_typical-subtyp"/>
</dbReference>
<dbReference type="InterPro" id="IPR032675">
    <property type="entry name" value="LRR_dom_sf"/>
</dbReference>
<dbReference type="InterPro" id="IPR044640">
    <property type="entry name" value="RU2A"/>
</dbReference>
<dbReference type="InterPro" id="IPR003603">
    <property type="entry name" value="U2A'_phosphoprotein32A_C"/>
</dbReference>
<dbReference type="PANTHER" id="PTHR10552">
    <property type="entry name" value="U2 SMALL NUCLEAR RIBONUCLEOPROTEIN A"/>
    <property type="match status" value="1"/>
</dbReference>
<dbReference type="PANTHER" id="PTHR10552:SF6">
    <property type="entry name" value="U2 SMALL NUCLEAR RIBONUCLEOPROTEIN A"/>
    <property type="match status" value="1"/>
</dbReference>
<dbReference type="Pfam" id="PF14580">
    <property type="entry name" value="LRR_9"/>
    <property type="match status" value="1"/>
</dbReference>
<dbReference type="SMART" id="SM00369">
    <property type="entry name" value="LRR_TYP"/>
    <property type="match status" value="2"/>
</dbReference>
<dbReference type="SMART" id="SM00446">
    <property type="entry name" value="LRRcap"/>
    <property type="match status" value="1"/>
</dbReference>
<dbReference type="SUPFAM" id="SSF52058">
    <property type="entry name" value="L domain-like"/>
    <property type="match status" value="1"/>
</dbReference>
<dbReference type="PROSITE" id="PS51450">
    <property type="entry name" value="LRR"/>
    <property type="match status" value="3"/>
</dbReference>